<proteinExistence type="inferred from homology"/>
<comment type="function">
    <text evidence="1">Site-specific tyrosine recombinase, which acts by catalyzing the cutting and rejoining of the recombining DNA molecules. The XerC-XerD complex is essential to convert dimers of the bacterial chromosome into monomers to permit their segregation at cell division. It also contributes to the segregational stability of plasmids (By similarity).</text>
</comment>
<comment type="subunit">
    <text evidence="1">Forms a cyclic heterotetrameric complex composed of two molecules of XerC and two molecules of XerD.</text>
</comment>
<comment type="subcellular location">
    <subcellularLocation>
        <location evidence="1">Cytoplasm</location>
    </subcellularLocation>
</comment>
<comment type="similarity">
    <text evidence="4">Belongs to the 'phage' integrase family. XerD subfamily.</text>
</comment>
<comment type="sequence caution" evidence="4">
    <conflict type="erroneous initiation">
        <sequence resource="EMBL-CDS" id="AAX75308"/>
    </conflict>
</comment>
<dbReference type="EMBL" id="AE017223">
    <property type="protein sequence ID" value="AAX75308.1"/>
    <property type="status" value="ALT_INIT"/>
    <property type="molecule type" value="Genomic_DNA"/>
</dbReference>
<dbReference type="SMR" id="P0C122"/>
<dbReference type="EnsemblBacteria" id="AAX75308">
    <property type="protein sequence ID" value="AAX75308"/>
    <property type="gene ID" value="BruAb1_2006"/>
</dbReference>
<dbReference type="KEGG" id="bmb:BruAb1_2006"/>
<dbReference type="HOGENOM" id="CLU_027562_9_0_5"/>
<dbReference type="PRO" id="PR:P0C122"/>
<dbReference type="Proteomes" id="UP000000540">
    <property type="component" value="Chromosome I"/>
</dbReference>
<dbReference type="GO" id="GO:0005737">
    <property type="term" value="C:cytoplasm"/>
    <property type="evidence" value="ECO:0007669"/>
    <property type="project" value="UniProtKB-SubCell"/>
</dbReference>
<dbReference type="GO" id="GO:0003677">
    <property type="term" value="F:DNA binding"/>
    <property type="evidence" value="ECO:0007669"/>
    <property type="project" value="UniProtKB-KW"/>
</dbReference>
<dbReference type="GO" id="GO:0009037">
    <property type="term" value="F:tyrosine-based site-specific recombinase activity"/>
    <property type="evidence" value="ECO:0007669"/>
    <property type="project" value="UniProtKB-UniRule"/>
</dbReference>
<dbReference type="GO" id="GO:0051301">
    <property type="term" value="P:cell division"/>
    <property type="evidence" value="ECO:0007669"/>
    <property type="project" value="UniProtKB-KW"/>
</dbReference>
<dbReference type="GO" id="GO:0007059">
    <property type="term" value="P:chromosome segregation"/>
    <property type="evidence" value="ECO:0007669"/>
    <property type="project" value="UniProtKB-UniRule"/>
</dbReference>
<dbReference type="GO" id="GO:0006313">
    <property type="term" value="P:DNA transposition"/>
    <property type="evidence" value="ECO:0007669"/>
    <property type="project" value="UniProtKB-UniRule"/>
</dbReference>
<dbReference type="Gene3D" id="1.10.150.130">
    <property type="match status" value="1"/>
</dbReference>
<dbReference type="Gene3D" id="1.10.443.10">
    <property type="entry name" value="Intergrase catalytic core"/>
    <property type="match status" value="1"/>
</dbReference>
<dbReference type="HAMAP" id="MF_01808">
    <property type="entry name" value="Recomb_XerC_XerD"/>
    <property type="match status" value="1"/>
</dbReference>
<dbReference type="HAMAP" id="MF_01807">
    <property type="entry name" value="Recomb_XerD"/>
    <property type="match status" value="1"/>
</dbReference>
<dbReference type="InterPro" id="IPR044068">
    <property type="entry name" value="CB"/>
</dbReference>
<dbReference type="InterPro" id="IPR011010">
    <property type="entry name" value="DNA_brk_join_enz"/>
</dbReference>
<dbReference type="InterPro" id="IPR013762">
    <property type="entry name" value="Integrase-like_cat_sf"/>
</dbReference>
<dbReference type="InterPro" id="IPR002104">
    <property type="entry name" value="Integrase_catalytic"/>
</dbReference>
<dbReference type="InterPro" id="IPR010998">
    <property type="entry name" value="Integrase_recombinase_N"/>
</dbReference>
<dbReference type="InterPro" id="IPR004107">
    <property type="entry name" value="Integrase_SAM-like_N"/>
</dbReference>
<dbReference type="InterPro" id="IPR011932">
    <property type="entry name" value="Recomb_XerD"/>
</dbReference>
<dbReference type="InterPro" id="IPR023009">
    <property type="entry name" value="Tyrosine_recombinase_XerC/XerD"/>
</dbReference>
<dbReference type="InterPro" id="IPR050090">
    <property type="entry name" value="Tyrosine_recombinase_XerCD"/>
</dbReference>
<dbReference type="NCBIfam" id="NF001399">
    <property type="entry name" value="PRK00283.1"/>
    <property type="match status" value="1"/>
</dbReference>
<dbReference type="NCBIfam" id="TIGR02225">
    <property type="entry name" value="recomb_XerD"/>
    <property type="match status" value="1"/>
</dbReference>
<dbReference type="PANTHER" id="PTHR30349">
    <property type="entry name" value="PHAGE INTEGRASE-RELATED"/>
    <property type="match status" value="1"/>
</dbReference>
<dbReference type="PANTHER" id="PTHR30349:SF90">
    <property type="entry name" value="TYROSINE RECOMBINASE XERD"/>
    <property type="match status" value="1"/>
</dbReference>
<dbReference type="Pfam" id="PF02899">
    <property type="entry name" value="Phage_int_SAM_1"/>
    <property type="match status" value="1"/>
</dbReference>
<dbReference type="Pfam" id="PF00589">
    <property type="entry name" value="Phage_integrase"/>
    <property type="match status" value="1"/>
</dbReference>
<dbReference type="SUPFAM" id="SSF56349">
    <property type="entry name" value="DNA breaking-rejoining enzymes"/>
    <property type="match status" value="1"/>
</dbReference>
<dbReference type="PROSITE" id="PS51900">
    <property type="entry name" value="CB"/>
    <property type="match status" value="1"/>
</dbReference>
<dbReference type="PROSITE" id="PS51898">
    <property type="entry name" value="TYR_RECOMBINASE"/>
    <property type="match status" value="1"/>
</dbReference>
<evidence type="ECO:0000250" key="1"/>
<evidence type="ECO:0000255" key="2">
    <source>
        <dbReference type="PROSITE-ProRule" id="PRU01246"/>
    </source>
</evidence>
<evidence type="ECO:0000255" key="3">
    <source>
        <dbReference type="PROSITE-ProRule" id="PRU01248"/>
    </source>
</evidence>
<evidence type="ECO:0000305" key="4"/>
<protein>
    <recommendedName>
        <fullName>Tyrosine recombinase XerD</fullName>
    </recommendedName>
</protein>
<feature type="chain" id="PRO_0000095374" description="Tyrosine recombinase XerD">
    <location>
        <begin position="1"/>
        <end position="309"/>
    </location>
</feature>
<feature type="domain" description="Core-binding (CB)" evidence="3">
    <location>
        <begin position="3"/>
        <end position="88"/>
    </location>
</feature>
<feature type="domain" description="Tyr recombinase" evidence="2">
    <location>
        <begin position="109"/>
        <end position="302"/>
    </location>
</feature>
<feature type="active site" evidence="2">
    <location>
        <position position="158"/>
    </location>
</feature>
<feature type="active site" evidence="2">
    <location>
        <position position="182"/>
    </location>
</feature>
<feature type="active site" evidence="2">
    <location>
        <position position="254"/>
    </location>
</feature>
<feature type="active site" evidence="2">
    <location>
        <position position="257"/>
    </location>
</feature>
<feature type="active site" evidence="2">
    <location>
        <position position="280"/>
    </location>
</feature>
<feature type="active site" description="O-(3'-phospho-DNA)-tyrosine intermediate" evidence="2">
    <location>
        <position position="289"/>
    </location>
</feature>
<name>XERD_BRUAB</name>
<accession>P0C122</accession>
<accession>Q57AM6</accession>
<accession>Q9FDG0</accession>
<organism>
    <name type="scientific">Brucella abortus biovar 1 (strain 9-941)</name>
    <dbReference type="NCBI Taxonomy" id="262698"/>
    <lineage>
        <taxon>Bacteria</taxon>
        <taxon>Pseudomonadati</taxon>
        <taxon>Pseudomonadota</taxon>
        <taxon>Alphaproteobacteria</taxon>
        <taxon>Hyphomicrobiales</taxon>
        <taxon>Brucellaceae</taxon>
        <taxon>Brucella/Ochrobactrum group</taxon>
        <taxon>Brucella</taxon>
    </lineage>
</organism>
<gene>
    <name type="primary">xerD</name>
    <name type="ordered locus">BruAb1_2006</name>
</gene>
<reference key="1">
    <citation type="journal article" date="2005" name="J. Bacteriol.">
        <title>Completion of the genome sequence of Brucella abortus and comparison to the highly similar genomes of Brucella melitensis and Brucella suis.</title>
        <authorList>
            <person name="Halling S.M."/>
            <person name="Peterson-Burch B.D."/>
            <person name="Bricker B.J."/>
            <person name="Zuerner R.L."/>
            <person name="Qing Z."/>
            <person name="Li L.-L."/>
            <person name="Kapur V."/>
            <person name="Alt D.P."/>
            <person name="Olsen S.C."/>
        </authorList>
    </citation>
    <scope>NUCLEOTIDE SEQUENCE [LARGE SCALE GENOMIC DNA]</scope>
    <source>
        <strain>9-941</strain>
    </source>
</reference>
<sequence>MTMRASLAIENFLEMMSAERGAAQNTLESYRRDLEAAAEELAAKGVNLAEAETGHIRMTLDTMAAQGFAPTSQARRLSALRQFFRFLYSEGFRQDDPTGILYAPKKQKPLPKIMSVENVGKLLDRAALEANEAAEPGERIKALRLHALLETLYATGLRVSELVGLPVTVARTDHRFLLVRGKGSKDRMVPLSRKARDALQKFLTLRDSLPGSDDNPWLFPAFSESGHLARQVFARELKGLAARAGLAASSASPHVLRHAFASHLLQNGADLRTVQQLLGHADISTTQIYTHVLEERLHKLVSEHHPLAD</sequence>
<keyword id="KW-0131">Cell cycle</keyword>
<keyword id="KW-0132">Cell division</keyword>
<keyword id="KW-0159">Chromosome partition</keyword>
<keyword id="KW-0963">Cytoplasm</keyword>
<keyword id="KW-0229">DNA integration</keyword>
<keyword id="KW-0233">DNA recombination</keyword>
<keyword id="KW-0238">DNA-binding</keyword>